<evidence type="ECO:0000255" key="1">
    <source>
        <dbReference type="HAMAP-Rule" id="MF_01346"/>
    </source>
</evidence>
<evidence type="ECO:0000305" key="2"/>
<name>ATPA_RICRO</name>
<reference key="1">
    <citation type="journal article" date="2008" name="Infect. Immun.">
        <title>Genomic comparison of virulent Rickettsia rickettsii Sheila Smith and avirulent Rickettsia rickettsii Iowa.</title>
        <authorList>
            <person name="Ellison D.W."/>
            <person name="Clark T.R."/>
            <person name="Sturdevant D.E."/>
            <person name="Virtaneva K."/>
            <person name="Porcella S.F."/>
            <person name="Hackstadt T."/>
        </authorList>
    </citation>
    <scope>NUCLEOTIDE SEQUENCE [LARGE SCALE GENOMIC DNA]</scope>
    <source>
        <strain>Iowa</strain>
    </source>
</reference>
<proteinExistence type="inferred from homology"/>
<dbReference type="EC" id="7.1.2.2" evidence="1"/>
<dbReference type="EMBL" id="CP000766">
    <property type="protein sequence ID" value="ABY73178.1"/>
    <property type="status" value="ALT_INIT"/>
    <property type="molecule type" value="Genomic_DNA"/>
</dbReference>
<dbReference type="RefSeq" id="WP_012151345.1">
    <property type="nucleotide sequence ID" value="NC_010263.3"/>
</dbReference>
<dbReference type="SMR" id="B0BVB8"/>
<dbReference type="GeneID" id="79937847"/>
<dbReference type="KEGG" id="rrj:RrIowa_1447"/>
<dbReference type="eggNOG" id="COG0056">
    <property type="taxonomic scope" value="Bacteria"/>
</dbReference>
<dbReference type="HOGENOM" id="CLU_010091_2_1_5"/>
<dbReference type="Proteomes" id="UP000000796">
    <property type="component" value="Chromosome"/>
</dbReference>
<dbReference type="GO" id="GO:0005886">
    <property type="term" value="C:plasma membrane"/>
    <property type="evidence" value="ECO:0007669"/>
    <property type="project" value="UniProtKB-SubCell"/>
</dbReference>
<dbReference type="GO" id="GO:0045259">
    <property type="term" value="C:proton-transporting ATP synthase complex"/>
    <property type="evidence" value="ECO:0007669"/>
    <property type="project" value="UniProtKB-KW"/>
</dbReference>
<dbReference type="GO" id="GO:0043531">
    <property type="term" value="F:ADP binding"/>
    <property type="evidence" value="ECO:0007669"/>
    <property type="project" value="TreeGrafter"/>
</dbReference>
<dbReference type="GO" id="GO:0005524">
    <property type="term" value="F:ATP binding"/>
    <property type="evidence" value="ECO:0007669"/>
    <property type="project" value="UniProtKB-UniRule"/>
</dbReference>
<dbReference type="GO" id="GO:0046933">
    <property type="term" value="F:proton-transporting ATP synthase activity, rotational mechanism"/>
    <property type="evidence" value="ECO:0007669"/>
    <property type="project" value="UniProtKB-UniRule"/>
</dbReference>
<dbReference type="CDD" id="cd18113">
    <property type="entry name" value="ATP-synt_F1_alpha_C"/>
    <property type="match status" value="1"/>
</dbReference>
<dbReference type="CDD" id="cd18116">
    <property type="entry name" value="ATP-synt_F1_alpha_N"/>
    <property type="match status" value="1"/>
</dbReference>
<dbReference type="CDD" id="cd01132">
    <property type="entry name" value="F1-ATPase_alpha_CD"/>
    <property type="match status" value="1"/>
</dbReference>
<dbReference type="FunFam" id="1.20.150.20:FF:000001">
    <property type="entry name" value="ATP synthase subunit alpha"/>
    <property type="match status" value="1"/>
</dbReference>
<dbReference type="FunFam" id="2.40.30.20:FF:000001">
    <property type="entry name" value="ATP synthase subunit alpha"/>
    <property type="match status" value="1"/>
</dbReference>
<dbReference type="FunFam" id="3.40.50.300:FF:002432">
    <property type="entry name" value="ATP synthase subunit alpha, mitochondrial"/>
    <property type="match status" value="1"/>
</dbReference>
<dbReference type="Gene3D" id="2.40.30.20">
    <property type="match status" value="1"/>
</dbReference>
<dbReference type="Gene3D" id="1.20.150.20">
    <property type="entry name" value="ATP synthase alpha/beta chain, C-terminal domain"/>
    <property type="match status" value="1"/>
</dbReference>
<dbReference type="Gene3D" id="3.40.50.300">
    <property type="entry name" value="P-loop containing nucleotide triphosphate hydrolases"/>
    <property type="match status" value="1"/>
</dbReference>
<dbReference type="HAMAP" id="MF_01346">
    <property type="entry name" value="ATP_synth_alpha_bact"/>
    <property type="match status" value="1"/>
</dbReference>
<dbReference type="InterPro" id="IPR023366">
    <property type="entry name" value="ATP_synth_asu-like_sf"/>
</dbReference>
<dbReference type="InterPro" id="IPR000793">
    <property type="entry name" value="ATP_synth_asu_C"/>
</dbReference>
<dbReference type="InterPro" id="IPR038376">
    <property type="entry name" value="ATP_synth_asu_C_sf"/>
</dbReference>
<dbReference type="InterPro" id="IPR033732">
    <property type="entry name" value="ATP_synth_F1_a_nt-bd_dom"/>
</dbReference>
<dbReference type="InterPro" id="IPR005294">
    <property type="entry name" value="ATP_synth_F1_asu"/>
</dbReference>
<dbReference type="InterPro" id="IPR020003">
    <property type="entry name" value="ATPase_a/bsu_AS"/>
</dbReference>
<dbReference type="InterPro" id="IPR004100">
    <property type="entry name" value="ATPase_F1/V1/A1_a/bsu_N"/>
</dbReference>
<dbReference type="InterPro" id="IPR036121">
    <property type="entry name" value="ATPase_F1/V1/A1_a/bsu_N_sf"/>
</dbReference>
<dbReference type="InterPro" id="IPR000194">
    <property type="entry name" value="ATPase_F1/V1/A1_a/bsu_nucl-bd"/>
</dbReference>
<dbReference type="InterPro" id="IPR027417">
    <property type="entry name" value="P-loop_NTPase"/>
</dbReference>
<dbReference type="NCBIfam" id="TIGR00962">
    <property type="entry name" value="atpA"/>
    <property type="match status" value="1"/>
</dbReference>
<dbReference type="NCBIfam" id="NF009884">
    <property type="entry name" value="PRK13343.1"/>
    <property type="match status" value="1"/>
</dbReference>
<dbReference type="PANTHER" id="PTHR48082">
    <property type="entry name" value="ATP SYNTHASE SUBUNIT ALPHA, MITOCHONDRIAL"/>
    <property type="match status" value="1"/>
</dbReference>
<dbReference type="PANTHER" id="PTHR48082:SF2">
    <property type="entry name" value="ATP SYNTHASE SUBUNIT ALPHA, MITOCHONDRIAL"/>
    <property type="match status" value="1"/>
</dbReference>
<dbReference type="Pfam" id="PF00006">
    <property type="entry name" value="ATP-synt_ab"/>
    <property type="match status" value="1"/>
</dbReference>
<dbReference type="Pfam" id="PF00306">
    <property type="entry name" value="ATP-synt_ab_C"/>
    <property type="match status" value="1"/>
</dbReference>
<dbReference type="Pfam" id="PF02874">
    <property type="entry name" value="ATP-synt_ab_N"/>
    <property type="match status" value="1"/>
</dbReference>
<dbReference type="PIRSF" id="PIRSF039088">
    <property type="entry name" value="F_ATPase_subunit_alpha"/>
    <property type="match status" value="1"/>
</dbReference>
<dbReference type="SUPFAM" id="SSF47917">
    <property type="entry name" value="C-terminal domain of alpha and beta subunits of F1 ATP synthase"/>
    <property type="match status" value="1"/>
</dbReference>
<dbReference type="SUPFAM" id="SSF50615">
    <property type="entry name" value="N-terminal domain of alpha and beta subunits of F1 ATP synthase"/>
    <property type="match status" value="1"/>
</dbReference>
<dbReference type="SUPFAM" id="SSF52540">
    <property type="entry name" value="P-loop containing nucleoside triphosphate hydrolases"/>
    <property type="match status" value="1"/>
</dbReference>
<dbReference type="PROSITE" id="PS00152">
    <property type="entry name" value="ATPASE_ALPHA_BETA"/>
    <property type="match status" value="1"/>
</dbReference>
<comment type="function">
    <text evidence="1">Produces ATP from ADP in the presence of a proton gradient across the membrane. The alpha chain is a regulatory subunit.</text>
</comment>
<comment type="catalytic activity">
    <reaction evidence="1">
        <text>ATP + H2O + 4 H(+)(in) = ADP + phosphate + 5 H(+)(out)</text>
        <dbReference type="Rhea" id="RHEA:57720"/>
        <dbReference type="ChEBI" id="CHEBI:15377"/>
        <dbReference type="ChEBI" id="CHEBI:15378"/>
        <dbReference type="ChEBI" id="CHEBI:30616"/>
        <dbReference type="ChEBI" id="CHEBI:43474"/>
        <dbReference type="ChEBI" id="CHEBI:456216"/>
        <dbReference type="EC" id="7.1.2.2"/>
    </reaction>
</comment>
<comment type="subunit">
    <text evidence="1">F-type ATPases have 2 components, CF(1) - the catalytic core - and CF(0) - the membrane proton channel. CF(1) has five subunits: alpha(3), beta(3), gamma(1), delta(1), epsilon(1). CF(0) has three main subunits: a(1), b(2) and c(9-12). The alpha and beta chains form an alternating ring which encloses part of the gamma chain. CF(1) is attached to CF(0) by a central stalk formed by the gamma and epsilon chains, while a peripheral stalk is formed by the delta and b chains.</text>
</comment>
<comment type="subcellular location">
    <subcellularLocation>
        <location evidence="1">Cell inner membrane</location>
        <topology evidence="1">Peripheral membrane protein</topology>
    </subcellularLocation>
</comment>
<comment type="similarity">
    <text evidence="1">Belongs to the ATPase alpha/beta chains family.</text>
</comment>
<comment type="sequence caution" evidence="2">
    <conflict type="erroneous initiation">
        <sequence resource="EMBL-CDS" id="ABY73178"/>
    </conflict>
</comment>
<accession>B0BVB8</accession>
<sequence>MKLKPIEVAEILQKEIANINCLSELEEVGQVITVGDGIAQIYGLANVKSGEVVEFKSGVKGLVLNLENDSVGVVIMGDDNQVQQGDNVKRTKEVLEVPVGKALLGRVVDALGNPIDGKGDIASKEYRHIEMKAPGIIERTSVSEPVQTGIKAIDSLIPIGRGQRELIIGDRQTGKTAIAVDTIINQKQAHSLTNESDKIYCIYVAIGQKRSSVAQIVKKLEDAGAMDYTLIVSATASEAAALQFIAPYSACSMGEYFRDNGMHALIIYDDLSKHAVAYRQISLLLRRPPGREAYPGDVFYLHSRLLERAAKMSEEKGSGSLTALPIIETQAGDVSAYIPTNVISITDGQIFLESELFYKGVRPAVNVGISVSRVGSAAQIKAMKQVAGSVKLELAQFRELESFSQFGSDLDPATKAQIDHGKRLVEILKQAQYNPFPVEEQIVSIYVGTKKYLNDVPLQKVKEFEDKMLTEIRLNKKDILESIKNEQCITEETEQKLKAFLENFVKEFVK</sequence>
<feature type="chain" id="PRO_0000339054" description="ATP synthase subunit alpha">
    <location>
        <begin position="1"/>
        <end position="510"/>
    </location>
</feature>
<feature type="binding site" evidence="1">
    <location>
        <begin position="169"/>
        <end position="176"/>
    </location>
    <ligand>
        <name>ATP</name>
        <dbReference type="ChEBI" id="CHEBI:30616"/>
    </ligand>
</feature>
<feature type="site" description="Required for activity" evidence="1">
    <location>
        <position position="370"/>
    </location>
</feature>
<organism>
    <name type="scientific">Rickettsia rickettsii (strain Iowa)</name>
    <dbReference type="NCBI Taxonomy" id="452659"/>
    <lineage>
        <taxon>Bacteria</taxon>
        <taxon>Pseudomonadati</taxon>
        <taxon>Pseudomonadota</taxon>
        <taxon>Alphaproteobacteria</taxon>
        <taxon>Rickettsiales</taxon>
        <taxon>Rickettsiaceae</taxon>
        <taxon>Rickettsieae</taxon>
        <taxon>Rickettsia</taxon>
        <taxon>spotted fever group</taxon>
    </lineage>
</organism>
<gene>
    <name evidence="1" type="primary">atpA</name>
    <name type="ordered locus">RrIowa_1447</name>
</gene>
<protein>
    <recommendedName>
        <fullName evidence="1">ATP synthase subunit alpha</fullName>
        <ecNumber evidence="1">7.1.2.2</ecNumber>
    </recommendedName>
    <alternativeName>
        <fullName evidence="1">ATP synthase F1 sector subunit alpha</fullName>
    </alternativeName>
    <alternativeName>
        <fullName evidence="1">F-ATPase subunit alpha</fullName>
    </alternativeName>
</protein>
<keyword id="KW-0066">ATP synthesis</keyword>
<keyword id="KW-0067">ATP-binding</keyword>
<keyword id="KW-0997">Cell inner membrane</keyword>
<keyword id="KW-1003">Cell membrane</keyword>
<keyword id="KW-0139">CF(1)</keyword>
<keyword id="KW-0375">Hydrogen ion transport</keyword>
<keyword id="KW-0406">Ion transport</keyword>
<keyword id="KW-0472">Membrane</keyword>
<keyword id="KW-0547">Nucleotide-binding</keyword>
<keyword id="KW-1278">Translocase</keyword>
<keyword id="KW-0813">Transport</keyword>